<reference key="1">
    <citation type="submission" date="2006-11" db="EMBL/GenBank/DDBJ databases">
        <title>Sequence of Campylobacter fetus subsp. fetus 82-40.</title>
        <authorList>
            <person name="Fouts D.E."/>
            <person name="Nelson K.E."/>
        </authorList>
    </citation>
    <scope>NUCLEOTIDE SEQUENCE [LARGE SCALE GENOMIC DNA]</scope>
    <source>
        <strain>82-40</strain>
    </source>
</reference>
<dbReference type="EMBL" id="CP000487">
    <property type="protein sequence ID" value="ABK82289.1"/>
    <property type="molecule type" value="Genomic_DNA"/>
</dbReference>
<dbReference type="RefSeq" id="WP_002848387.1">
    <property type="nucleotide sequence ID" value="NC_008599.1"/>
</dbReference>
<dbReference type="SMR" id="A0RMQ6"/>
<dbReference type="GeneID" id="61064131"/>
<dbReference type="KEGG" id="cff:CFF8240_0287"/>
<dbReference type="eggNOG" id="COG0254">
    <property type="taxonomic scope" value="Bacteria"/>
</dbReference>
<dbReference type="HOGENOM" id="CLU_114306_4_3_7"/>
<dbReference type="Proteomes" id="UP000000760">
    <property type="component" value="Chromosome"/>
</dbReference>
<dbReference type="GO" id="GO:1990904">
    <property type="term" value="C:ribonucleoprotein complex"/>
    <property type="evidence" value="ECO:0007669"/>
    <property type="project" value="UniProtKB-KW"/>
</dbReference>
<dbReference type="GO" id="GO:0005840">
    <property type="term" value="C:ribosome"/>
    <property type="evidence" value="ECO:0007669"/>
    <property type="project" value="UniProtKB-KW"/>
</dbReference>
<dbReference type="GO" id="GO:0046872">
    <property type="term" value="F:metal ion binding"/>
    <property type="evidence" value="ECO:0007669"/>
    <property type="project" value="UniProtKB-KW"/>
</dbReference>
<dbReference type="GO" id="GO:0019843">
    <property type="term" value="F:rRNA binding"/>
    <property type="evidence" value="ECO:0007669"/>
    <property type="project" value="UniProtKB-KW"/>
</dbReference>
<dbReference type="GO" id="GO:0003735">
    <property type="term" value="F:structural constituent of ribosome"/>
    <property type="evidence" value="ECO:0007669"/>
    <property type="project" value="InterPro"/>
</dbReference>
<dbReference type="GO" id="GO:0006412">
    <property type="term" value="P:translation"/>
    <property type="evidence" value="ECO:0007669"/>
    <property type="project" value="UniProtKB-UniRule"/>
</dbReference>
<dbReference type="Gene3D" id="4.10.830.30">
    <property type="entry name" value="Ribosomal protein L31"/>
    <property type="match status" value="1"/>
</dbReference>
<dbReference type="HAMAP" id="MF_00501">
    <property type="entry name" value="Ribosomal_bL31_1"/>
    <property type="match status" value="1"/>
</dbReference>
<dbReference type="InterPro" id="IPR034704">
    <property type="entry name" value="Ribosomal_bL28/bL31-like_sf"/>
</dbReference>
<dbReference type="InterPro" id="IPR002150">
    <property type="entry name" value="Ribosomal_bL31"/>
</dbReference>
<dbReference type="InterPro" id="IPR027491">
    <property type="entry name" value="Ribosomal_bL31_A"/>
</dbReference>
<dbReference type="InterPro" id="IPR042105">
    <property type="entry name" value="Ribosomal_bL31_sf"/>
</dbReference>
<dbReference type="NCBIfam" id="TIGR00105">
    <property type="entry name" value="L31"/>
    <property type="match status" value="1"/>
</dbReference>
<dbReference type="NCBIfam" id="NF000612">
    <property type="entry name" value="PRK00019.1"/>
    <property type="match status" value="1"/>
</dbReference>
<dbReference type="NCBIfam" id="NF001809">
    <property type="entry name" value="PRK00528.1"/>
    <property type="match status" value="1"/>
</dbReference>
<dbReference type="PANTHER" id="PTHR33280">
    <property type="entry name" value="50S RIBOSOMAL PROTEIN L31, CHLOROPLASTIC"/>
    <property type="match status" value="1"/>
</dbReference>
<dbReference type="PANTHER" id="PTHR33280:SF1">
    <property type="entry name" value="LARGE RIBOSOMAL SUBUNIT PROTEIN BL31C"/>
    <property type="match status" value="1"/>
</dbReference>
<dbReference type="Pfam" id="PF01197">
    <property type="entry name" value="Ribosomal_L31"/>
    <property type="match status" value="1"/>
</dbReference>
<dbReference type="PRINTS" id="PR01249">
    <property type="entry name" value="RIBOSOMALL31"/>
</dbReference>
<dbReference type="SUPFAM" id="SSF143800">
    <property type="entry name" value="L28p-like"/>
    <property type="match status" value="1"/>
</dbReference>
<dbReference type="PROSITE" id="PS01143">
    <property type="entry name" value="RIBOSOMAL_L31"/>
    <property type="match status" value="1"/>
</dbReference>
<feature type="chain" id="PRO_1000126579" description="Large ribosomal subunit protein bL31">
    <location>
        <begin position="1"/>
        <end position="66"/>
    </location>
</feature>
<feature type="binding site" evidence="1">
    <location>
        <position position="16"/>
    </location>
    <ligand>
        <name>Zn(2+)</name>
        <dbReference type="ChEBI" id="CHEBI:29105"/>
    </ligand>
</feature>
<feature type="binding site" evidence="1">
    <location>
        <position position="18"/>
    </location>
    <ligand>
        <name>Zn(2+)</name>
        <dbReference type="ChEBI" id="CHEBI:29105"/>
    </ligand>
</feature>
<feature type="binding site" evidence="1">
    <location>
        <position position="36"/>
    </location>
    <ligand>
        <name>Zn(2+)</name>
        <dbReference type="ChEBI" id="CHEBI:29105"/>
    </ligand>
</feature>
<feature type="binding site" evidence="1">
    <location>
        <position position="39"/>
    </location>
    <ligand>
        <name>Zn(2+)</name>
        <dbReference type="ChEBI" id="CHEBI:29105"/>
    </ligand>
</feature>
<name>RL31_CAMFF</name>
<evidence type="ECO:0000255" key="1">
    <source>
        <dbReference type="HAMAP-Rule" id="MF_00501"/>
    </source>
</evidence>
<evidence type="ECO:0000305" key="2"/>
<accession>A0RMQ6</accession>
<gene>
    <name evidence="1" type="primary">rpmE</name>
    <name type="ordered locus">CFF8240_0287</name>
</gene>
<organism>
    <name type="scientific">Campylobacter fetus subsp. fetus (strain 82-40)</name>
    <dbReference type="NCBI Taxonomy" id="360106"/>
    <lineage>
        <taxon>Bacteria</taxon>
        <taxon>Pseudomonadati</taxon>
        <taxon>Campylobacterota</taxon>
        <taxon>Epsilonproteobacteria</taxon>
        <taxon>Campylobacterales</taxon>
        <taxon>Campylobacteraceae</taxon>
        <taxon>Campylobacter</taxon>
    </lineage>
</organism>
<keyword id="KW-0479">Metal-binding</keyword>
<keyword id="KW-0687">Ribonucleoprotein</keyword>
<keyword id="KW-0689">Ribosomal protein</keyword>
<keyword id="KW-0694">RNA-binding</keyword>
<keyword id="KW-0699">rRNA-binding</keyword>
<keyword id="KW-0862">Zinc</keyword>
<comment type="function">
    <text evidence="1">Binds the 23S rRNA.</text>
</comment>
<comment type="cofactor">
    <cofactor evidence="1">
        <name>Zn(2+)</name>
        <dbReference type="ChEBI" id="CHEBI:29105"/>
    </cofactor>
    <text evidence="1">Binds 1 zinc ion per subunit.</text>
</comment>
<comment type="subunit">
    <text evidence="1">Part of the 50S ribosomal subunit.</text>
</comment>
<comment type="similarity">
    <text evidence="1">Belongs to the bacterial ribosomal protein bL31 family. Type A subfamily.</text>
</comment>
<protein>
    <recommendedName>
        <fullName evidence="1">Large ribosomal subunit protein bL31</fullName>
    </recommendedName>
    <alternativeName>
        <fullName evidence="2">50S ribosomal protein L31</fullName>
    </alternativeName>
</protein>
<proteinExistence type="inferred from homology"/>
<sequence>MKKDIHPEYVECTVTCACGNTFTSKSNKSEIRVDICSECHPFFTGSEKIVDSAGRVDKFKKKYNMK</sequence>